<keyword id="KW-0997">Cell inner membrane</keyword>
<keyword id="KW-1003">Cell membrane</keyword>
<keyword id="KW-0472">Membrane</keyword>
<keyword id="KW-1185">Reference proteome</keyword>
<keyword id="KW-0812">Transmembrane</keyword>
<keyword id="KW-1133">Transmembrane helix</keyword>
<keyword id="KW-0813">Transport</keyword>
<organism>
    <name type="scientific">Escherichia coli (strain K12)</name>
    <dbReference type="NCBI Taxonomy" id="83333"/>
    <lineage>
        <taxon>Bacteria</taxon>
        <taxon>Pseudomonadati</taxon>
        <taxon>Pseudomonadota</taxon>
        <taxon>Gammaproteobacteria</taxon>
        <taxon>Enterobacterales</taxon>
        <taxon>Enterobacteriaceae</taxon>
        <taxon>Escherichia</taxon>
    </lineage>
</organism>
<comment type="subcellular location">
    <subcellularLocation>
        <location evidence="2">Cell inner membrane</location>
        <topology evidence="1">Multi-pass membrane protein</topology>
    </subcellularLocation>
</comment>
<comment type="induction">
    <text evidence="3">Down-regulated by cystine.</text>
</comment>
<comment type="similarity">
    <text evidence="4">Belongs to the major facilitator superfamily.</text>
</comment>
<name>YIHN_ECOLI</name>
<gene>
    <name type="primary">yihN</name>
    <name type="ordered locus">b3874</name>
    <name type="ordered locus">JW3845</name>
</gene>
<reference key="1">
    <citation type="journal article" date="1993" name="Nucleic Acids Res.">
        <title>Analysis of the Escherichia coli genome. III. DNA sequence of the region from 87.2 to 89.2 minutes.</title>
        <authorList>
            <person name="Plunkett G. III"/>
            <person name="Burland V."/>
            <person name="Daniels D.L."/>
            <person name="Blattner F.R."/>
        </authorList>
    </citation>
    <scope>NUCLEOTIDE SEQUENCE [LARGE SCALE GENOMIC DNA]</scope>
    <source>
        <strain>K12 / MG1655 / ATCC 47076</strain>
    </source>
</reference>
<reference key="2">
    <citation type="journal article" date="1997" name="Science">
        <title>The complete genome sequence of Escherichia coli K-12.</title>
        <authorList>
            <person name="Blattner F.R."/>
            <person name="Plunkett G. III"/>
            <person name="Bloch C.A."/>
            <person name="Perna N.T."/>
            <person name="Burland V."/>
            <person name="Riley M."/>
            <person name="Collado-Vides J."/>
            <person name="Glasner J.D."/>
            <person name="Rode C.K."/>
            <person name="Mayhew G.F."/>
            <person name="Gregor J."/>
            <person name="Davis N.W."/>
            <person name="Kirkpatrick H.A."/>
            <person name="Goeden M.A."/>
            <person name="Rose D.J."/>
            <person name="Mau B."/>
            <person name="Shao Y."/>
        </authorList>
    </citation>
    <scope>NUCLEOTIDE SEQUENCE [LARGE SCALE GENOMIC DNA]</scope>
    <source>
        <strain>K12 / MG1655 / ATCC 47076</strain>
    </source>
</reference>
<reference key="3">
    <citation type="journal article" date="2006" name="Mol. Syst. Biol.">
        <title>Highly accurate genome sequences of Escherichia coli K-12 strains MG1655 and W3110.</title>
        <authorList>
            <person name="Hayashi K."/>
            <person name="Morooka N."/>
            <person name="Yamamoto Y."/>
            <person name="Fujita K."/>
            <person name="Isono K."/>
            <person name="Choi S."/>
            <person name="Ohtsubo E."/>
            <person name="Baba T."/>
            <person name="Wanner B.L."/>
            <person name="Mori H."/>
            <person name="Horiuchi T."/>
        </authorList>
    </citation>
    <scope>NUCLEOTIDE SEQUENCE [LARGE SCALE GENOMIC DNA]</scope>
    <source>
        <strain>K12 / W3110 / ATCC 27325 / DSM 5911</strain>
    </source>
</reference>
<reference key="4">
    <citation type="journal article" date="2005" name="Science">
        <title>Global topology analysis of the Escherichia coli inner membrane proteome.</title>
        <authorList>
            <person name="Daley D.O."/>
            <person name="Rapp M."/>
            <person name="Granseth E."/>
            <person name="Melen K."/>
            <person name="Drew D."/>
            <person name="von Heijne G."/>
        </authorList>
    </citation>
    <scope>TOPOLOGY [LARGE SCALE ANALYSIS]</scope>
    <scope>SUBCELLULAR LOCATION</scope>
    <source>
        <strain>K12 / MG1655 / ATCC 47076</strain>
    </source>
</reference>
<reference key="5">
    <citation type="journal article" date="2015" name="Biosci. Biotechnol. Biochem.">
        <title>Induction of the Escherichia coli yijE gene expression by cystine.</title>
        <authorList>
            <person name="Yamamoto K."/>
            <person name="Nonaka G."/>
            <person name="Ozawa T."/>
            <person name="Takumi K."/>
            <person name="Ishihama A."/>
        </authorList>
    </citation>
    <scope>INDUCTION</scope>
    <source>
        <strain>K12 / BW25113</strain>
    </source>
</reference>
<dbReference type="EMBL" id="L19201">
    <property type="protein sequence ID" value="AAB03008.1"/>
    <property type="molecule type" value="Genomic_DNA"/>
</dbReference>
<dbReference type="EMBL" id="U00096">
    <property type="protein sequence ID" value="AAC76871.1"/>
    <property type="molecule type" value="Genomic_DNA"/>
</dbReference>
<dbReference type="EMBL" id="AP009048">
    <property type="protein sequence ID" value="BAE77435.1"/>
    <property type="molecule type" value="Genomic_DNA"/>
</dbReference>
<dbReference type="PIR" id="S40819">
    <property type="entry name" value="S40819"/>
</dbReference>
<dbReference type="RefSeq" id="NP_418310.1">
    <property type="nucleotide sequence ID" value="NC_000913.3"/>
</dbReference>
<dbReference type="RefSeq" id="WP_000956313.1">
    <property type="nucleotide sequence ID" value="NZ_SSZK01000026.1"/>
</dbReference>
<dbReference type="SMR" id="P32135"/>
<dbReference type="BioGRID" id="4262634">
    <property type="interactions" value="192"/>
</dbReference>
<dbReference type="DIP" id="DIP-12495N"/>
<dbReference type="FunCoup" id="P32135">
    <property type="interactions" value="11"/>
</dbReference>
<dbReference type="IntAct" id="P32135">
    <property type="interactions" value="1"/>
</dbReference>
<dbReference type="STRING" id="511145.b3874"/>
<dbReference type="TCDB" id="2.A.1.52.1">
    <property type="family name" value="the major facilitator superfamily (mfs)"/>
</dbReference>
<dbReference type="PaxDb" id="511145-b3874"/>
<dbReference type="EnsemblBacteria" id="AAC76871">
    <property type="protein sequence ID" value="AAC76871"/>
    <property type="gene ID" value="b3874"/>
</dbReference>
<dbReference type="GeneID" id="948365"/>
<dbReference type="KEGG" id="ecj:JW3845"/>
<dbReference type="KEGG" id="eco:b3874"/>
<dbReference type="KEGG" id="ecoc:C3026_20945"/>
<dbReference type="PATRIC" id="fig|1411691.4.peg.2837"/>
<dbReference type="EchoBASE" id="EB1786"/>
<dbReference type="eggNOG" id="COG2271">
    <property type="taxonomic scope" value="Bacteria"/>
</dbReference>
<dbReference type="HOGENOM" id="CLU_043790_0_0_6"/>
<dbReference type="InParanoid" id="P32135"/>
<dbReference type="OMA" id="TTIFLFW"/>
<dbReference type="OrthoDB" id="9773404at2"/>
<dbReference type="PhylomeDB" id="P32135"/>
<dbReference type="BioCyc" id="EcoCyc:YIHN-MONOMER"/>
<dbReference type="PRO" id="PR:P32135"/>
<dbReference type="Proteomes" id="UP000000625">
    <property type="component" value="Chromosome"/>
</dbReference>
<dbReference type="GO" id="GO:0005886">
    <property type="term" value="C:plasma membrane"/>
    <property type="evidence" value="ECO:0000314"/>
    <property type="project" value="EcoCyc"/>
</dbReference>
<dbReference type="GO" id="GO:0022857">
    <property type="term" value="F:transmembrane transporter activity"/>
    <property type="evidence" value="ECO:0000318"/>
    <property type="project" value="GO_Central"/>
</dbReference>
<dbReference type="CDD" id="cd06174">
    <property type="entry name" value="MFS"/>
    <property type="match status" value="1"/>
</dbReference>
<dbReference type="FunFam" id="1.20.1250.20:FF:000167">
    <property type="entry name" value="Transporter, major facilitator family"/>
    <property type="match status" value="1"/>
</dbReference>
<dbReference type="FunFam" id="1.20.1250.20:FF:000191">
    <property type="entry name" value="Transporter, major facilitator family"/>
    <property type="match status" value="1"/>
</dbReference>
<dbReference type="Gene3D" id="1.20.1250.20">
    <property type="entry name" value="MFS general substrate transporter like domains"/>
    <property type="match status" value="2"/>
</dbReference>
<dbReference type="InterPro" id="IPR011701">
    <property type="entry name" value="MFS"/>
</dbReference>
<dbReference type="InterPro" id="IPR020846">
    <property type="entry name" value="MFS_dom"/>
</dbReference>
<dbReference type="InterPro" id="IPR036259">
    <property type="entry name" value="MFS_trans_sf"/>
</dbReference>
<dbReference type="InterPro" id="IPR051337">
    <property type="entry name" value="OPA_Antiporter"/>
</dbReference>
<dbReference type="PANTHER" id="PTHR43826">
    <property type="entry name" value="GLUCOSE-6-PHOSPHATE EXCHANGER SLC37A4"/>
    <property type="match status" value="1"/>
</dbReference>
<dbReference type="PANTHER" id="PTHR43826:SF7">
    <property type="entry name" value="PROTEIN UHPC, PUTATIVE-RELATED"/>
    <property type="match status" value="1"/>
</dbReference>
<dbReference type="Pfam" id="PF07690">
    <property type="entry name" value="MFS_1"/>
    <property type="match status" value="1"/>
</dbReference>
<dbReference type="SUPFAM" id="SSF103473">
    <property type="entry name" value="MFS general substrate transporter"/>
    <property type="match status" value="1"/>
</dbReference>
<dbReference type="PROSITE" id="PS50850">
    <property type="entry name" value="MFS"/>
    <property type="match status" value="1"/>
</dbReference>
<feature type="chain" id="PRO_0000169676" description="Inner membrane protein YihN">
    <location>
        <begin position="1"/>
        <end position="421"/>
    </location>
</feature>
<feature type="topological domain" description="Periplasmic" evidence="4">
    <location>
        <begin position="1"/>
        <end position="44"/>
    </location>
</feature>
<feature type="transmembrane region" description="Helical" evidence="1">
    <location>
        <begin position="45"/>
        <end position="65"/>
    </location>
</feature>
<feature type="topological domain" description="Cytoplasmic" evidence="4">
    <location>
        <begin position="66"/>
        <end position="73"/>
    </location>
</feature>
<feature type="transmembrane region" description="Helical" evidence="1">
    <location>
        <begin position="74"/>
        <end position="91"/>
    </location>
</feature>
<feature type="topological domain" description="Periplasmic" evidence="4">
    <location>
        <begin position="92"/>
        <end position="95"/>
    </location>
</feature>
<feature type="transmembrane region" description="Helical" evidence="1">
    <location>
        <begin position="96"/>
        <end position="118"/>
    </location>
</feature>
<feature type="topological domain" description="Cytoplasmic" evidence="4">
    <location>
        <begin position="119"/>
        <end position="146"/>
    </location>
</feature>
<feature type="transmembrane region" description="Helical" evidence="1">
    <location>
        <begin position="147"/>
        <end position="167"/>
    </location>
</feature>
<feature type="topological domain" description="Periplasmic" evidence="4">
    <location>
        <position position="168"/>
    </location>
</feature>
<feature type="transmembrane region" description="Helical" evidence="1">
    <location>
        <begin position="169"/>
        <end position="189"/>
    </location>
</feature>
<feature type="topological domain" description="Cytoplasmic" evidence="4">
    <location>
        <begin position="190"/>
        <end position="220"/>
    </location>
</feature>
<feature type="transmembrane region" description="Helical" evidence="1">
    <location>
        <begin position="221"/>
        <end position="241"/>
    </location>
</feature>
<feature type="transmembrane region" description="Helical" evidence="1">
    <location>
        <begin position="242"/>
        <end position="262"/>
    </location>
</feature>
<feature type="topological domain" description="Cytoplasmic" evidence="4">
    <location>
        <begin position="263"/>
        <end position="288"/>
    </location>
</feature>
<feature type="transmembrane region" description="Helical" evidence="1">
    <location>
        <begin position="289"/>
        <end position="309"/>
    </location>
</feature>
<feature type="transmembrane region" description="Helical" evidence="1">
    <location>
        <begin position="310"/>
        <end position="330"/>
    </location>
</feature>
<feature type="topological domain" description="Cytoplasmic" evidence="4">
    <location>
        <begin position="331"/>
        <end position="354"/>
    </location>
</feature>
<feature type="transmembrane region" description="Helical" evidence="1">
    <location>
        <begin position="355"/>
        <end position="375"/>
    </location>
</feature>
<feature type="topological domain" description="Periplasmic" evidence="4">
    <location>
        <begin position="376"/>
        <end position="385"/>
    </location>
</feature>
<feature type="transmembrane region" description="Helical" evidence="1">
    <location>
        <begin position="386"/>
        <end position="406"/>
    </location>
</feature>
<feature type="topological domain" description="Cytoplasmic" evidence="2">
    <location>
        <begin position="407"/>
        <end position="421"/>
    </location>
</feature>
<sequence>MLTKKKWALFSLLTLCGGTIYKLPSLKDAFYIPMQEYFHLTNGQIGNAMSVNSFVTTVGFFLSIYFADKLPRRYTMSFSLIATGLLGVYLTTMPGYWGILFVWALFGVTCDMMNWPVLLKSVSRLGNSEQQGRLFGFFETGRGIVDTVVAFSALAVFTWFGSGLLGFKAGIWFYSLIVIAVGIIIFFVLNDKEEAPSVEVKKEDGASKNTSMTSVLKDKTIWLIAFNVFFVYAVYCGLTFFIPFLKNIYLLPVALVGAYGIINQYCLKMIGGPIGGMISDKILKSPSKYLCYTFIISTAALVLLIMLPHESMPVYLGMACTLGFGAIVFTQRAVFFAPIGEAKIAENKTGAAMALGSFIGYAPAMFCFSLYGYILDLNPGIIGYKIVFGIMACFAFSGAVVSVMLVKRISQRKKEMLAAEA</sequence>
<evidence type="ECO:0000255" key="1"/>
<evidence type="ECO:0000269" key="2">
    <source>
    </source>
</evidence>
<evidence type="ECO:0000269" key="3">
    <source>
    </source>
</evidence>
<evidence type="ECO:0000305" key="4"/>
<proteinExistence type="evidence at protein level"/>
<accession>P32135</accession>
<accession>Q2M8H1</accession>
<protein>
    <recommendedName>
        <fullName evidence="4">Inner membrane protein YihN</fullName>
    </recommendedName>
</protein>